<accession>Q8H4L3</accession>
<accession>A0A0P0X3Z1</accession>
<proteinExistence type="inferred from homology"/>
<keyword id="KW-0012">Acyltransferase</keyword>
<keyword id="KW-0284">Flavonoid biosynthesis</keyword>
<keyword id="KW-1185">Reference proteome</keyword>
<keyword id="KW-0808">Transferase</keyword>
<gene>
    <name type="primary">CHS2</name>
    <name type="ordered locus">Os07g0214900</name>
    <name type="ordered locus">LOC_Os07g11440</name>
    <name type="ORF">OJ1116_C08.125</name>
</gene>
<sequence length="403" mass="43925">MVTSTVKLEEVRRMQRAEGMAAVLAIGTATPANCVYQTDYPDYYFRVTNSEHLTNLKERFQRMCESSQIRKRYTHLTEEILQENPSMCVFTAPSLDARQDMVVAEVPKLGKAAAEEAIKEWGQPMSRITHLVFCTTNGVDMPGADYQVAKMLGLPTSVKRLMMYQQGCFAGGTVLRVAKDLAENNRGARVLVVCSEIMAMAFRGPSESHLDSLVGHALFGDGAAAVIVGSDPDEAADERPLFQIVSASQTILPGTEDAIVGHLREVGLTFHLPKDVPEFISDSVEGALTDAFMPLGVHDWNSIFWVVHPGGPAILDQVEEKVALHKARMRASRNVLSEYGNMASATVLFVLDEMRKLSADDGHATTGEGMDWGVLFGFGPGLTVETIVLHSVPITAAAPLIMQ</sequence>
<organism>
    <name type="scientific">Oryza sativa subsp. japonica</name>
    <name type="common">Rice</name>
    <dbReference type="NCBI Taxonomy" id="39947"/>
    <lineage>
        <taxon>Eukaryota</taxon>
        <taxon>Viridiplantae</taxon>
        <taxon>Streptophyta</taxon>
        <taxon>Embryophyta</taxon>
        <taxon>Tracheophyta</taxon>
        <taxon>Spermatophyta</taxon>
        <taxon>Magnoliopsida</taxon>
        <taxon>Liliopsida</taxon>
        <taxon>Poales</taxon>
        <taxon>Poaceae</taxon>
        <taxon>BOP clade</taxon>
        <taxon>Oryzoideae</taxon>
        <taxon>Oryzeae</taxon>
        <taxon>Oryzinae</taxon>
        <taxon>Oryza</taxon>
        <taxon>Oryza sativa</taxon>
    </lineage>
</organism>
<dbReference type="EC" id="2.3.1.74"/>
<dbReference type="EMBL" id="AP004002">
    <property type="protein sequence ID" value="BAC20662.1"/>
    <property type="molecule type" value="Genomic_DNA"/>
</dbReference>
<dbReference type="EMBL" id="AP008213">
    <property type="protein sequence ID" value="BAF21101.1"/>
    <property type="molecule type" value="Genomic_DNA"/>
</dbReference>
<dbReference type="EMBL" id="AP014963">
    <property type="protein sequence ID" value="BAT00622.1"/>
    <property type="molecule type" value="Genomic_DNA"/>
</dbReference>
<dbReference type="RefSeq" id="XP_015646206.1">
    <property type="nucleotide sequence ID" value="XM_015790720.1"/>
</dbReference>
<dbReference type="SMR" id="Q8H4L3"/>
<dbReference type="FunCoup" id="Q8H4L3">
    <property type="interactions" value="47"/>
</dbReference>
<dbReference type="STRING" id="39947.Q8H4L3"/>
<dbReference type="PaxDb" id="39947-Q8H4L3"/>
<dbReference type="EnsemblPlants" id="Os07t0214900-01">
    <property type="protein sequence ID" value="Os07t0214900-01"/>
    <property type="gene ID" value="Os07g0214900"/>
</dbReference>
<dbReference type="Gramene" id="Os07t0214900-01">
    <property type="protein sequence ID" value="Os07t0214900-01"/>
    <property type="gene ID" value="Os07g0214900"/>
</dbReference>
<dbReference type="KEGG" id="dosa:Os07g0214900"/>
<dbReference type="eggNOG" id="ENOG502QRSY">
    <property type="taxonomic scope" value="Eukaryota"/>
</dbReference>
<dbReference type="HOGENOM" id="CLU_034992_2_0_1"/>
<dbReference type="InParanoid" id="Q8H4L3"/>
<dbReference type="OMA" id="NICEYNA"/>
<dbReference type="OrthoDB" id="1529441at2759"/>
<dbReference type="PlantReactome" id="R-OSA-1119513">
    <property type="pathway name" value="Pinobanksin biosynthesis"/>
</dbReference>
<dbReference type="PlantReactome" id="R-OSA-1119531">
    <property type="pathway name" value="Flavonoid biosynthesis"/>
</dbReference>
<dbReference type="PlantReactome" id="R-OSA-1119630">
    <property type="pathway name" value="Resveratrol biosynthesis"/>
</dbReference>
<dbReference type="UniPathway" id="UPA00154"/>
<dbReference type="Proteomes" id="UP000000763">
    <property type="component" value="Chromosome 7"/>
</dbReference>
<dbReference type="Proteomes" id="UP000059680">
    <property type="component" value="Chromosome 7"/>
</dbReference>
<dbReference type="GO" id="GO:0016747">
    <property type="term" value="F:acyltransferase activity, transferring groups other than amino-acyl groups"/>
    <property type="evidence" value="ECO:0000318"/>
    <property type="project" value="GO_Central"/>
</dbReference>
<dbReference type="GO" id="GO:0016210">
    <property type="term" value="F:naringenin-chalcone synthase activity"/>
    <property type="evidence" value="ECO:0007669"/>
    <property type="project" value="UniProtKB-EC"/>
</dbReference>
<dbReference type="GO" id="GO:0009813">
    <property type="term" value="P:flavonoid biosynthetic process"/>
    <property type="evidence" value="ECO:0007669"/>
    <property type="project" value="UniProtKB-UniPathway"/>
</dbReference>
<dbReference type="GO" id="GO:0030639">
    <property type="term" value="P:polyketide biosynthetic process"/>
    <property type="evidence" value="ECO:0000318"/>
    <property type="project" value="GO_Central"/>
</dbReference>
<dbReference type="CDD" id="cd00831">
    <property type="entry name" value="CHS_like"/>
    <property type="match status" value="1"/>
</dbReference>
<dbReference type="FunFam" id="3.40.47.10:FF:000014">
    <property type="entry name" value="Chalcone synthase 1"/>
    <property type="match status" value="1"/>
</dbReference>
<dbReference type="FunFam" id="3.40.47.10:FF:000025">
    <property type="entry name" value="Chalcone synthase 2"/>
    <property type="match status" value="1"/>
</dbReference>
<dbReference type="Gene3D" id="3.40.47.10">
    <property type="match status" value="2"/>
</dbReference>
<dbReference type="InterPro" id="IPR012328">
    <property type="entry name" value="Chalcone/stilbene_synt_C"/>
</dbReference>
<dbReference type="InterPro" id="IPR001099">
    <property type="entry name" value="Chalcone/stilbene_synt_N"/>
</dbReference>
<dbReference type="InterPro" id="IPR018088">
    <property type="entry name" value="Chalcone/stilbene_synthase_AS"/>
</dbReference>
<dbReference type="InterPro" id="IPR011141">
    <property type="entry name" value="Polyketide_synthase_type-III"/>
</dbReference>
<dbReference type="InterPro" id="IPR016039">
    <property type="entry name" value="Thiolase-like"/>
</dbReference>
<dbReference type="PANTHER" id="PTHR11877:SF14">
    <property type="entry name" value="CHALCONE SYNTHASE"/>
    <property type="match status" value="1"/>
</dbReference>
<dbReference type="PANTHER" id="PTHR11877">
    <property type="entry name" value="HYDROXYMETHYLGLUTARYL-COA SYNTHASE"/>
    <property type="match status" value="1"/>
</dbReference>
<dbReference type="Pfam" id="PF02797">
    <property type="entry name" value="Chal_sti_synt_C"/>
    <property type="match status" value="1"/>
</dbReference>
<dbReference type="Pfam" id="PF00195">
    <property type="entry name" value="Chal_sti_synt_N"/>
    <property type="match status" value="1"/>
</dbReference>
<dbReference type="PIRSF" id="PIRSF000451">
    <property type="entry name" value="PKS_III"/>
    <property type="match status" value="1"/>
</dbReference>
<dbReference type="SUPFAM" id="SSF53901">
    <property type="entry name" value="Thiolase-like"/>
    <property type="match status" value="2"/>
</dbReference>
<dbReference type="PROSITE" id="PS00441">
    <property type="entry name" value="CHALCONE_SYNTH"/>
    <property type="match status" value="1"/>
</dbReference>
<feature type="chain" id="PRO_0000407327" description="Chalcone synthase 2">
    <location>
        <begin position="1"/>
        <end position="403"/>
    </location>
</feature>
<feature type="active site" description="Acyl-thioester intermediate" evidence="2">
    <location>
        <position position="168"/>
    </location>
</feature>
<feature type="binding site" evidence="1">
    <location>
        <begin position="59"/>
        <end position="66"/>
    </location>
    <ligand>
        <name>CoA</name>
        <dbReference type="ChEBI" id="CHEBI:57287"/>
    </ligand>
</feature>
<feature type="binding site" evidence="1">
    <location>
        <begin position="220"/>
        <end position="221"/>
    </location>
    <ligand>
        <name>substrate</name>
    </ligand>
</feature>
<feature type="binding site" evidence="1">
    <location>
        <position position="313"/>
    </location>
    <ligand>
        <name>CoA</name>
        <dbReference type="ChEBI" id="CHEBI:57287"/>
    </ligand>
</feature>
<protein>
    <recommendedName>
        <fullName>Chalcone synthase 2</fullName>
        <shortName>OsCHS2</shortName>
        <ecNumber>2.3.1.74</ecNumber>
    </recommendedName>
    <alternativeName>
        <fullName>Naregenin-chalcone synthase</fullName>
    </alternativeName>
</protein>
<evidence type="ECO:0000250" key="1"/>
<evidence type="ECO:0000255" key="2">
    <source>
        <dbReference type="PROSITE-ProRule" id="PRU10023"/>
    </source>
</evidence>
<evidence type="ECO:0000305" key="3"/>
<reference key="1">
    <citation type="journal article" date="2005" name="Nature">
        <title>The map-based sequence of the rice genome.</title>
        <authorList>
            <consortium name="International rice genome sequencing project (IRGSP)"/>
        </authorList>
    </citation>
    <scope>NUCLEOTIDE SEQUENCE [LARGE SCALE GENOMIC DNA]</scope>
    <source>
        <strain>cv. Nipponbare</strain>
    </source>
</reference>
<reference key="2">
    <citation type="journal article" date="2008" name="Nucleic Acids Res.">
        <title>The rice annotation project database (RAP-DB): 2008 update.</title>
        <authorList>
            <consortium name="The rice annotation project (RAP)"/>
        </authorList>
    </citation>
    <scope>GENOME REANNOTATION</scope>
    <source>
        <strain>cv. Nipponbare</strain>
    </source>
</reference>
<reference key="3">
    <citation type="journal article" date="2013" name="Rice">
        <title>Improvement of the Oryza sativa Nipponbare reference genome using next generation sequence and optical map data.</title>
        <authorList>
            <person name="Kawahara Y."/>
            <person name="de la Bastide M."/>
            <person name="Hamilton J.P."/>
            <person name="Kanamori H."/>
            <person name="McCombie W.R."/>
            <person name="Ouyang S."/>
            <person name="Schwartz D.C."/>
            <person name="Tanaka T."/>
            <person name="Wu J."/>
            <person name="Zhou S."/>
            <person name="Childs K.L."/>
            <person name="Davidson R.M."/>
            <person name="Lin H."/>
            <person name="Quesada-Ocampo L."/>
            <person name="Vaillancourt B."/>
            <person name="Sakai H."/>
            <person name="Lee S.S."/>
            <person name="Kim J."/>
            <person name="Numa H."/>
            <person name="Itoh T."/>
            <person name="Buell C.R."/>
            <person name="Matsumoto T."/>
        </authorList>
    </citation>
    <scope>GENOME REANNOTATION</scope>
    <source>
        <strain>cv. Nipponbare</strain>
    </source>
</reference>
<comment type="function">
    <text evidence="1">The primary product of this enzyme is 4,2',4',6'-tetrahydroxychalcone (also termed naringenin-chalcone or chalcone) which can under specific conditions spontaneously isomerize into naringenin.</text>
</comment>
<comment type="catalytic activity">
    <reaction evidence="2">
        <text>(E)-4-coumaroyl-CoA + 3 malonyl-CoA + 3 H(+) = 2',4,4',6'-tetrahydroxychalcone + 3 CO2 + 4 CoA</text>
        <dbReference type="Rhea" id="RHEA:11128"/>
        <dbReference type="ChEBI" id="CHEBI:15378"/>
        <dbReference type="ChEBI" id="CHEBI:15413"/>
        <dbReference type="ChEBI" id="CHEBI:16526"/>
        <dbReference type="ChEBI" id="CHEBI:57287"/>
        <dbReference type="ChEBI" id="CHEBI:57384"/>
        <dbReference type="ChEBI" id="CHEBI:85008"/>
        <dbReference type="EC" id="2.3.1.74"/>
    </reaction>
</comment>
<comment type="pathway">
    <text>Secondary metabolite biosynthesis; flavonoid biosynthesis.</text>
</comment>
<comment type="subunit">
    <text evidence="1">Homodimer.</text>
</comment>
<comment type="similarity">
    <text evidence="3">Belongs to the thiolase-like superfamily. Chalcone/stilbene synthases family.</text>
</comment>
<name>CHS2_ORYSJ</name>